<sequence length="297" mass="31992">MDIVTGSTTALITPFKNGKLDESAYANLIKRQINNGINAVCPVGTTGESATLSYAEDKRCIEIAVEICRGTATKVLAGAGSNSTSEAIEAAITAQKCGVDAIFSVAPYYVKPSQEGLYQHYKAIAESVSDMPFMLYNVPGRTVVDISADTVIRLFDDVKNIYGIKEATGSLERTVELLSRRPELKVFSGDDAIDYPILANGGAGITSVTSNLLPDLKSELVKKALNGDFTGSKAINDMLFPINKALFIESNPIMIKAAMYIAGLIDTLEYRLPLVAPSVENMKKIESVMKNYEIKGL</sequence>
<organism>
    <name type="scientific">Sulfurimonas denitrificans (strain ATCC 33889 / DSM 1251)</name>
    <name type="common">Thiomicrospira denitrificans (strain ATCC 33889 / DSM 1251)</name>
    <dbReference type="NCBI Taxonomy" id="326298"/>
    <lineage>
        <taxon>Bacteria</taxon>
        <taxon>Pseudomonadati</taxon>
        <taxon>Campylobacterota</taxon>
        <taxon>Epsilonproteobacteria</taxon>
        <taxon>Campylobacterales</taxon>
        <taxon>Sulfurimonadaceae</taxon>
        <taxon>Sulfurimonas</taxon>
    </lineage>
</organism>
<reference key="1">
    <citation type="journal article" date="2008" name="Appl. Environ. Microbiol.">
        <title>Genome of the epsilonproteobacterial chemolithoautotroph Sulfurimonas denitrificans.</title>
        <authorList>
            <person name="Sievert S.M."/>
            <person name="Scott K.M."/>
            <person name="Klotz M.G."/>
            <person name="Chain P.S.G."/>
            <person name="Hauser L.J."/>
            <person name="Hemp J."/>
            <person name="Huegler M."/>
            <person name="Land M."/>
            <person name="Lapidus A."/>
            <person name="Larimer F.W."/>
            <person name="Lucas S."/>
            <person name="Malfatti S.A."/>
            <person name="Meyer F."/>
            <person name="Paulsen I.T."/>
            <person name="Ren Q."/>
            <person name="Simon J."/>
            <person name="Bailey K."/>
            <person name="Diaz E."/>
            <person name="Fitzpatrick K.A."/>
            <person name="Glover B."/>
            <person name="Gwatney N."/>
            <person name="Korajkic A."/>
            <person name="Long A."/>
            <person name="Mobberley J.M."/>
            <person name="Pantry S.N."/>
            <person name="Pazder G."/>
            <person name="Peterson S."/>
            <person name="Quintanilla J.D."/>
            <person name="Sprinkle R."/>
            <person name="Stephens J."/>
            <person name="Thomas P."/>
            <person name="Vaughn R."/>
            <person name="Weber M.J."/>
            <person name="Wooten L.L."/>
        </authorList>
    </citation>
    <scope>NUCLEOTIDE SEQUENCE [LARGE SCALE GENOMIC DNA]</scope>
    <source>
        <strain>ATCC 33889 / DSM 1251</strain>
    </source>
</reference>
<protein>
    <recommendedName>
        <fullName evidence="1">4-hydroxy-tetrahydrodipicolinate synthase</fullName>
        <shortName evidence="1">HTPA synthase</shortName>
        <ecNumber evidence="1">4.3.3.7</ecNumber>
    </recommendedName>
</protein>
<dbReference type="EC" id="4.3.3.7" evidence="1"/>
<dbReference type="EMBL" id="CP000153">
    <property type="protein sequence ID" value="ABB44504.1"/>
    <property type="molecule type" value="Genomic_DNA"/>
</dbReference>
<dbReference type="RefSeq" id="WP_011372856.1">
    <property type="nucleotide sequence ID" value="NC_007575.1"/>
</dbReference>
<dbReference type="SMR" id="Q30R77"/>
<dbReference type="STRING" id="326298.Suden_1226"/>
<dbReference type="KEGG" id="tdn:Suden_1226"/>
<dbReference type="eggNOG" id="COG0329">
    <property type="taxonomic scope" value="Bacteria"/>
</dbReference>
<dbReference type="HOGENOM" id="CLU_049343_7_0_7"/>
<dbReference type="OrthoDB" id="9782828at2"/>
<dbReference type="UniPathway" id="UPA00034">
    <property type="reaction ID" value="UER00017"/>
</dbReference>
<dbReference type="Proteomes" id="UP000002714">
    <property type="component" value="Chromosome"/>
</dbReference>
<dbReference type="GO" id="GO:0005829">
    <property type="term" value="C:cytosol"/>
    <property type="evidence" value="ECO:0007669"/>
    <property type="project" value="TreeGrafter"/>
</dbReference>
<dbReference type="GO" id="GO:0008840">
    <property type="term" value="F:4-hydroxy-tetrahydrodipicolinate synthase activity"/>
    <property type="evidence" value="ECO:0007669"/>
    <property type="project" value="UniProtKB-UniRule"/>
</dbReference>
<dbReference type="GO" id="GO:0019877">
    <property type="term" value="P:diaminopimelate biosynthetic process"/>
    <property type="evidence" value="ECO:0007669"/>
    <property type="project" value="UniProtKB-UniRule"/>
</dbReference>
<dbReference type="GO" id="GO:0009089">
    <property type="term" value="P:lysine biosynthetic process via diaminopimelate"/>
    <property type="evidence" value="ECO:0007669"/>
    <property type="project" value="UniProtKB-UniRule"/>
</dbReference>
<dbReference type="CDD" id="cd00950">
    <property type="entry name" value="DHDPS"/>
    <property type="match status" value="1"/>
</dbReference>
<dbReference type="Gene3D" id="3.20.20.70">
    <property type="entry name" value="Aldolase class I"/>
    <property type="match status" value="1"/>
</dbReference>
<dbReference type="HAMAP" id="MF_00418">
    <property type="entry name" value="DapA"/>
    <property type="match status" value="1"/>
</dbReference>
<dbReference type="InterPro" id="IPR013785">
    <property type="entry name" value="Aldolase_TIM"/>
</dbReference>
<dbReference type="InterPro" id="IPR005263">
    <property type="entry name" value="DapA"/>
</dbReference>
<dbReference type="InterPro" id="IPR002220">
    <property type="entry name" value="DapA-like"/>
</dbReference>
<dbReference type="InterPro" id="IPR020625">
    <property type="entry name" value="Schiff_base-form_aldolases_AS"/>
</dbReference>
<dbReference type="NCBIfam" id="TIGR00674">
    <property type="entry name" value="dapA"/>
    <property type="match status" value="1"/>
</dbReference>
<dbReference type="PANTHER" id="PTHR12128:SF66">
    <property type="entry name" value="4-HYDROXY-2-OXOGLUTARATE ALDOLASE, MITOCHONDRIAL"/>
    <property type="match status" value="1"/>
</dbReference>
<dbReference type="PANTHER" id="PTHR12128">
    <property type="entry name" value="DIHYDRODIPICOLINATE SYNTHASE"/>
    <property type="match status" value="1"/>
</dbReference>
<dbReference type="Pfam" id="PF00701">
    <property type="entry name" value="DHDPS"/>
    <property type="match status" value="1"/>
</dbReference>
<dbReference type="PIRSF" id="PIRSF001365">
    <property type="entry name" value="DHDPS"/>
    <property type="match status" value="1"/>
</dbReference>
<dbReference type="PRINTS" id="PR00146">
    <property type="entry name" value="DHPICSNTHASE"/>
</dbReference>
<dbReference type="SMART" id="SM01130">
    <property type="entry name" value="DHDPS"/>
    <property type="match status" value="1"/>
</dbReference>
<dbReference type="SUPFAM" id="SSF51569">
    <property type="entry name" value="Aldolase"/>
    <property type="match status" value="1"/>
</dbReference>
<dbReference type="PROSITE" id="PS00666">
    <property type="entry name" value="DHDPS_2"/>
    <property type="match status" value="1"/>
</dbReference>
<comment type="function">
    <text evidence="1">Catalyzes the condensation of (S)-aspartate-beta-semialdehyde [(S)-ASA] and pyruvate to 4-hydroxy-tetrahydrodipicolinate (HTPA).</text>
</comment>
<comment type="catalytic activity">
    <reaction evidence="1">
        <text>L-aspartate 4-semialdehyde + pyruvate = (2S,4S)-4-hydroxy-2,3,4,5-tetrahydrodipicolinate + H2O + H(+)</text>
        <dbReference type="Rhea" id="RHEA:34171"/>
        <dbReference type="ChEBI" id="CHEBI:15361"/>
        <dbReference type="ChEBI" id="CHEBI:15377"/>
        <dbReference type="ChEBI" id="CHEBI:15378"/>
        <dbReference type="ChEBI" id="CHEBI:67139"/>
        <dbReference type="ChEBI" id="CHEBI:537519"/>
        <dbReference type="EC" id="4.3.3.7"/>
    </reaction>
</comment>
<comment type="pathway">
    <text evidence="1">Amino-acid biosynthesis; L-lysine biosynthesis via DAP pathway; (S)-tetrahydrodipicolinate from L-aspartate: step 3/4.</text>
</comment>
<comment type="subunit">
    <text evidence="1">Homotetramer; dimer of dimers.</text>
</comment>
<comment type="subcellular location">
    <subcellularLocation>
        <location evidence="1">Cytoplasm</location>
    </subcellularLocation>
</comment>
<comment type="similarity">
    <text evidence="1">Belongs to the DapA family.</text>
</comment>
<comment type="caution">
    <text evidence="2">Was originally thought to be a dihydrodipicolinate synthase (DHDPS), catalyzing the condensation of (S)-aspartate-beta-semialdehyde [(S)-ASA] and pyruvate to dihydrodipicolinate (DHDP). However, it was shown in E.coli that the product of the enzymatic reaction is not dihydrodipicolinate but in fact (4S)-4-hydroxy-2,3,4,5-tetrahydro-(2S)-dipicolinic acid (HTPA), and that the consecutive dehydration reaction leading to DHDP is not spontaneous but catalyzed by DapB.</text>
</comment>
<gene>
    <name evidence="1" type="primary">dapA</name>
    <name type="ordered locus">Suden_1226</name>
</gene>
<evidence type="ECO:0000255" key="1">
    <source>
        <dbReference type="HAMAP-Rule" id="MF_00418"/>
    </source>
</evidence>
<evidence type="ECO:0000305" key="2"/>
<keyword id="KW-0028">Amino-acid biosynthesis</keyword>
<keyword id="KW-0963">Cytoplasm</keyword>
<keyword id="KW-0220">Diaminopimelate biosynthesis</keyword>
<keyword id="KW-0456">Lyase</keyword>
<keyword id="KW-0457">Lysine biosynthesis</keyword>
<keyword id="KW-1185">Reference proteome</keyword>
<keyword id="KW-0704">Schiff base</keyword>
<proteinExistence type="inferred from homology"/>
<feature type="chain" id="PRO_0000340989" description="4-hydroxy-tetrahydrodipicolinate synthase">
    <location>
        <begin position="1"/>
        <end position="297"/>
    </location>
</feature>
<feature type="active site" description="Proton donor/acceptor" evidence="1">
    <location>
        <position position="136"/>
    </location>
</feature>
<feature type="active site" description="Schiff-base intermediate with substrate" evidence="1">
    <location>
        <position position="165"/>
    </location>
</feature>
<feature type="binding site" evidence="1">
    <location>
        <position position="46"/>
    </location>
    <ligand>
        <name>pyruvate</name>
        <dbReference type="ChEBI" id="CHEBI:15361"/>
    </ligand>
</feature>
<feature type="binding site" evidence="1">
    <location>
        <position position="206"/>
    </location>
    <ligand>
        <name>pyruvate</name>
        <dbReference type="ChEBI" id="CHEBI:15361"/>
    </ligand>
</feature>
<feature type="site" description="Part of a proton relay during catalysis" evidence="1">
    <location>
        <position position="45"/>
    </location>
</feature>
<feature type="site" description="Part of a proton relay during catalysis" evidence="1">
    <location>
        <position position="109"/>
    </location>
</feature>
<name>DAPA_SULDN</name>
<accession>Q30R77</accession>